<gene>
    <name evidence="2" type="primary">gshB</name>
    <name type="synonym">gsh-II</name>
</gene>
<dbReference type="EC" id="6.3.2.3" evidence="2"/>
<dbReference type="EMBL" id="M80425">
    <property type="protein sequence ID" value="AAA22064.1"/>
    <property type="molecule type" value="Genomic_DNA"/>
</dbReference>
<dbReference type="PIR" id="JQ1401">
    <property type="entry name" value="JQ1401"/>
</dbReference>
<dbReference type="SMR" id="P35667"/>
<dbReference type="UniPathway" id="UPA00142">
    <property type="reaction ID" value="UER00210"/>
</dbReference>
<dbReference type="GO" id="GO:0005737">
    <property type="term" value="C:cytoplasm"/>
    <property type="evidence" value="ECO:0007669"/>
    <property type="project" value="TreeGrafter"/>
</dbReference>
<dbReference type="GO" id="GO:0005524">
    <property type="term" value="F:ATP binding"/>
    <property type="evidence" value="ECO:0007669"/>
    <property type="project" value="UniProtKB-UniRule"/>
</dbReference>
<dbReference type="GO" id="GO:0004363">
    <property type="term" value="F:glutathione synthase activity"/>
    <property type="evidence" value="ECO:0007669"/>
    <property type="project" value="UniProtKB-UniRule"/>
</dbReference>
<dbReference type="GO" id="GO:0046872">
    <property type="term" value="F:metal ion binding"/>
    <property type="evidence" value="ECO:0007669"/>
    <property type="project" value="UniProtKB-KW"/>
</dbReference>
<dbReference type="Gene3D" id="3.40.50.20">
    <property type="match status" value="1"/>
</dbReference>
<dbReference type="Gene3D" id="3.30.1490.20">
    <property type="entry name" value="ATP-grasp fold, A domain"/>
    <property type="match status" value="1"/>
</dbReference>
<dbReference type="Gene3D" id="3.30.470.20">
    <property type="entry name" value="ATP-grasp fold, B domain"/>
    <property type="match status" value="1"/>
</dbReference>
<dbReference type="HAMAP" id="MF_00162">
    <property type="entry name" value="GSH_S"/>
    <property type="match status" value="1"/>
</dbReference>
<dbReference type="InterPro" id="IPR011761">
    <property type="entry name" value="ATP-grasp"/>
</dbReference>
<dbReference type="InterPro" id="IPR013815">
    <property type="entry name" value="ATP_grasp_subdomain_1"/>
</dbReference>
<dbReference type="InterPro" id="IPR006284">
    <property type="entry name" value="Glut_synth_pro"/>
</dbReference>
<dbReference type="InterPro" id="IPR004218">
    <property type="entry name" value="GSHS_ATP-bd"/>
</dbReference>
<dbReference type="InterPro" id="IPR004215">
    <property type="entry name" value="GSHS_N"/>
</dbReference>
<dbReference type="InterPro" id="IPR016185">
    <property type="entry name" value="PreATP-grasp_dom_sf"/>
</dbReference>
<dbReference type="NCBIfam" id="TIGR01380">
    <property type="entry name" value="glut_syn"/>
    <property type="match status" value="1"/>
</dbReference>
<dbReference type="NCBIfam" id="NF003573">
    <property type="entry name" value="PRK05246.1"/>
    <property type="match status" value="1"/>
</dbReference>
<dbReference type="PANTHER" id="PTHR21621:SF4">
    <property type="entry name" value="GLUTATHIONE SYNTHETASE"/>
    <property type="match status" value="1"/>
</dbReference>
<dbReference type="PANTHER" id="PTHR21621">
    <property type="entry name" value="RIBOSOMAL PROTEIN S6 MODIFICATION PROTEIN"/>
    <property type="match status" value="1"/>
</dbReference>
<dbReference type="Pfam" id="PF02955">
    <property type="entry name" value="GSH-S_ATP"/>
    <property type="match status" value="1"/>
</dbReference>
<dbReference type="Pfam" id="PF02951">
    <property type="entry name" value="GSH-S_N"/>
    <property type="match status" value="1"/>
</dbReference>
<dbReference type="SUPFAM" id="SSF56059">
    <property type="entry name" value="Glutathione synthetase ATP-binding domain-like"/>
    <property type="match status" value="1"/>
</dbReference>
<dbReference type="SUPFAM" id="SSF52440">
    <property type="entry name" value="PreATP-grasp domain"/>
    <property type="match status" value="1"/>
</dbReference>
<dbReference type="PROSITE" id="PS50975">
    <property type="entry name" value="ATP_GRASP"/>
    <property type="match status" value="1"/>
</dbReference>
<comment type="catalytic activity">
    <reaction evidence="2">
        <text>gamma-L-glutamyl-L-cysteine + glycine + ATP = glutathione + ADP + phosphate + H(+)</text>
        <dbReference type="Rhea" id="RHEA:13557"/>
        <dbReference type="ChEBI" id="CHEBI:15378"/>
        <dbReference type="ChEBI" id="CHEBI:30616"/>
        <dbReference type="ChEBI" id="CHEBI:43474"/>
        <dbReference type="ChEBI" id="CHEBI:57305"/>
        <dbReference type="ChEBI" id="CHEBI:57925"/>
        <dbReference type="ChEBI" id="CHEBI:58173"/>
        <dbReference type="ChEBI" id="CHEBI:456216"/>
        <dbReference type="EC" id="6.3.2.3"/>
    </reaction>
</comment>
<comment type="cofactor">
    <cofactor evidence="1">
        <name>Mg(2+)</name>
        <dbReference type="ChEBI" id="CHEBI:18420"/>
    </cofactor>
    <cofactor evidence="1">
        <name>Mn(2+)</name>
        <dbReference type="ChEBI" id="CHEBI:29035"/>
    </cofactor>
    <text evidence="1">Binds 1 Mg(2+) or Mn(2+) ion per subunit.</text>
</comment>
<comment type="pathway">
    <text evidence="2">Sulfur metabolism; glutathione biosynthesis; glutathione from L-cysteine and L-glutamate: step 2/2.</text>
</comment>
<comment type="similarity">
    <text evidence="2">Belongs to the prokaryotic GSH synthase family.</text>
</comment>
<organism>
    <name type="scientific">Anaplasma centrale</name>
    <dbReference type="NCBI Taxonomy" id="769"/>
    <lineage>
        <taxon>Bacteria</taxon>
        <taxon>Pseudomonadati</taxon>
        <taxon>Pseudomonadota</taxon>
        <taxon>Alphaproteobacteria</taxon>
        <taxon>Rickettsiales</taxon>
        <taxon>Anaplasmataceae</taxon>
        <taxon>Anaplasma</taxon>
    </lineage>
</organism>
<accession>P35667</accession>
<feature type="chain" id="PRO_0000197451" description="Glutathione synthetase">
    <location>
        <begin position="1"/>
        <end position="308"/>
    </location>
</feature>
<feature type="domain" description="ATP-grasp" evidence="2">
    <location>
        <begin position="117"/>
        <end position="300"/>
    </location>
</feature>
<feature type="binding site" evidence="2">
    <location>
        <begin position="143"/>
        <end position="198"/>
    </location>
    <ligand>
        <name>ATP</name>
        <dbReference type="ChEBI" id="CHEBI:30616"/>
    </ligand>
</feature>
<feature type="binding site" evidence="2">
    <location>
        <position position="271"/>
    </location>
    <ligand>
        <name>Mg(2+)</name>
        <dbReference type="ChEBI" id="CHEBI:18420"/>
    </ligand>
</feature>
<feature type="binding site" evidence="2">
    <location>
        <position position="273"/>
    </location>
    <ligand>
        <name>Mg(2+)</name>
        <dbReference type="ChEBI" id="CHEBI:18420"/>
    </ligand>
</feature>
<sequence length="308" mass="34512">MLKVAFQMDEDVVVGRDVSVKLVEEAQRRGHEVFFYRPTSLAFVCGELVAEAFSVRVGADSLHFHDKTRLPLGKLDMLFVRQNPPFDMRYVTTTYLLERLDILMINNPKAIRDHPEKLLPLSFPKFIPPTLITESVSEISAFYAEYGDIVLKPLYDYGGNGVCRICGRADVGAISSAMVERYEAPLVAQQFIDDISSDKRVVLLGGRPIGAVRRKVTAMGEIRTNLRVGATPEATELSDREREICHDVGMLLSSVDILFAGIDILGGHLIEVNVTSPCGILEINQVYGKTLERDCWDYFEYALLHRSP</sequence>
<protein>
    <recommendedName>
        <fullName evidence="2">Glutathione synthetase</fullName>
        <ecNumber evidence="2">6.3.2.3</ecNumber>
    </recommendedName>
    <alternativeName>
        <fullName evidence="2">GSH synthetase</fullName>
        <shortName evidence="2">GSH-S</shortName>
        <shortName evidence="2">GSHase</shortName>
    </alternativeName>
    <alternativeName>
        <fullName evidence="2">Glutathione synthase</fullName>
    </alternativeName>
</protein>
<proteinExistence type="inferred from homology"/>
<reference key="1">
    <citation type="journal article" date="1992" name="Biochem. Biophys. Res. Commun.">
        <title>Sequence of a putative glutathione synthetase II gene and flanking regions from Anaplasma centrale.</title>
        <authorList>
            <person name="Peters J.M."/>
            <person name="Dalrymple B.P."/>
            <person name="Jorgensen W.K."/>
        </authorList>
    </citation>
    <scope>NUCLEOTIDE SEQUENCE [GENOMIC DNA]</scope>
</reference>
<evidence type="ECO:0000250" key="1"/>
<evidence type="ECO:0000255" key="2">
    <source>
        <dbReference type="HAMAP-Rule" id="MF_00162"/>
    </source>
</evidence>
<keyword id="KW-0067">ATP-binding</keyword>
<keyword id="KW-0317">Glutathione biosynthesis</keyword>
<keyword id="KW-0436">Ligase</keyword>
<keyword id="KW-0460">Magnesium</keyword>
<keyword id="KW-0464">Manganese</keyword>
<keyword id="KW-0479">Metal-binding</keyword>
<keyword id="KW-0547">Nucleotide-binding</keyword>
<name>GSHB_ANACE</name>